<protein>
    <recommendedName>
        <fullName evidence="1">Macrolide export ATP-binding/permease protein MacB</fullName>
        <ecNumber evidence="1">7.6.2.-</ecNumber>
    </recommendedName>
</protein>
<sequence length="650" mass="70886">MIDIKGIRKSYQMGDTKVDVLKGISLKIERGDFVAIMGPSGSGKSTLMHILGLLDVPSEGSYNLNGREVADLSEDELAIVRREEIGFIFQQFNLLPRMEAWQNVSLPLIYSEDGFSYDKAQALLDKVGLAERIHHKSNELSGGQQQRIAIARSLINNPRIIFADEPTGNLDSKSEKEIIQILHKLNDQGITVIVVTHEEEIGQQAKRLIRLRDGVIQSDERLQALPAAPTTAQEKRQEKTAKWPVREMIEHLHQGFQTLAANKVRSGLSMLGILIGVAAVVGMLALGTGARQSIEKQLSSLGSNLLVLRAGNVRVGGVMQESGVRIRISLDDVSTIKNQISGIKDVSPSSSGRGQITYLNKNWNTQVMGVAPAYEQMRASTPIFGRFFSEEENQRRTLVAVIGTTVARELFGEKSPIGEMIKINKVNFRVIGVLPEKGAAGPQDQDDRILVPVVTAMYRLFGRNYVDSVDIEVRDAADIPEVQDSLQELMNKRHRVPVSSQGDAFNVFNMADIQQALNSTSQTLSMLLASIAAISLVVGGIGIMNIMLVSVTERTKEIGLRKAIGARRRDILLQFLAESIVVSVCGGLLGIALGVGFSLLISKVLGWSTVVSAGSVILSFGFSALIGIVFGSYPASKASKLHPIEALRYE</sequence>
<dbReference type="EC" id="7.6.2.-" evidence="1"/>
<dbReference type="EMBL" id="BX842647">
    <property type="protein sequence ID" value="CAE78668.1"/>
    <property type="molecule type" value="Genomic_DNA"/>
</dbReference>
<dbReference type="RefSeq" id="WP_011163270.1">
    <property type="nucleotide sequence ID" value="NC_005363.1"/>
</dbReference>
<dbReference type="SMR" id="Q6MPX9"/>
<dbReference type="STRING" id="264462.Bd0709"/>
<dbReference type="GeneID" id="93011797"/>
<dbReference type="KEGG" id="bba:Bd0709"/>
<dbReference type="eggNOG" id="COG0577">
    <property type="taxonomic scope" value="Bacteria"/>
</dbReference>
<dbReference type="eggNOG" id="COG1136">
    <property type="taxonomic scope" value="Bacteria"/>
</dbReference>
<dbReference type="HOGENOM" id="CLU_000604_78_2_7"/>
<dbReference type="Proteomes" id="UP000008080">
    <property type="component" value="Chromosome"/>
</dbReference>
<dbReference type="GO" id="GO:0005886">
    <property type="term" value="C:plasma membrane"/>
    <property type="evidence" value="ECO:0007669"/>
    <property type="project" value="UniProtKB-SubCell"/>
</dbReference>
<dbReference type="GO" id="GO:0005524">
    <property type="term" value="F:ATP binding"/>
    <property type="evidence" value="ECO:0007669"/>
    <property type="project" value="UniProtKB-KW"/>
</dbReference>
<dbReference type="GO" id="GO:0016887">
    <property type="term" value="F:ATP hydrolysis activity"/>
    <property type="evidence" value="ECO:0007669"/>
    <property type="project" value="InterPro"/>
</dbReference>
<dbReference type="GO" id="GO:0022857">
    <property type="term" value="F:transmembrane transporter activity"/>
    <property type="evidence" value="ECO:0007669"/>
    <property type="project" value="TreeGrafter"/>
</dbReference>
<dbReference type="GO" id="GO:0046677">
    <property type="term" value="P:response to antibiotic"/>
    <property type="evidence" value="ECO:0007669"/>
    <property type="project" value="UniProtKB-KW"/>
</dbReference>
<dbReference type="CDD" id="cd03255">
    <property type="entry name" value="ABC_MJ0796_LolCDE_FtsE"/>
    <property type="match status" value="1"/>
</dbReference>
<dbReference type="FunFam" id="3.40.50.300:FF:000032">
    <property type="entry name" value="Export ABC transporter ATP-binding protein"/>
    <property type="match status" value="1"/>
</dbReference>
<dbReference type="Gene3D" id="3.40.50.300">
    <property type="entry name" value="P-loop containing nucleotide triphosphate hydrolases"/>
    <property type="match status" value="1"/>
</dbReference>
<dbReference type="InterPro" id="IPR003593">
    <property type="entry name" value="AAA+_ATPase"/>
</dbReference>
<dbReference type="InterPro" id="IPR003838">
    <property type="entry name" value="ABC3_permease_C"/>
</dbReference>
<dbReference type="InterPro" id="IPR003439">
    <property type="entry name" value="ABC_transporter-like_ATP-bd"/>
</dbReference>
<dbReference type="InterPro" id="IPR017871">
    <property type="entry name" value="ABC_transporter-like_CS"/>
</dbReference>
<dbReference type="InterPro" id="IPR017911">
    <property type="entry name" value="MacB-like_ATP-bd"/>
</dbReference>
<dbReference type="InterPro" id="IPR025857">
    <property type="entry name" value="MacB_PCD"/>
</dbReference>
<dbReference type="InterPro" id="IPR050250">
    <property type="entry name" value="Macrolide_Exporter_MacB"/>
</dbReference>
<dbReference type="InterPro" id="IPR027417">
    <property type="entry name" value="P-loop_NTPase"/>
</dbReference>
<dbReference type="PANTHER" id="PTHR30572:SF4">
    <property type="entry name" value="ABC TRANSPORTER PERMEASE YTRF"/>
    <property type="match status" value="1"/>
</dbReference>
<dbReference type="PANTHER" id="PTHR30572">
    <property type="entry name" value="MEMBRANE COMPONENT OF TRANSPORTER-RELATED"/>
    <property type="match status" value="1"/>
</dbReference>
<dbReference type="Pfam" id="PF00005">
    <property type="entry name" value="ABC_tran"/>
    <property type="match status" value="1"/>
</dbReference>
<dbReference type="Pfam" id="PF02687">
    <property type="entry name" value="FtsX"/>
    <property type="match status" value="1"/>
</dbReference>
<dbReference type="Pfam" id="PF12704">
    <property type="entry name" value="MacB_PCD"/>
    <property type="match status" value="1"/>
</dbReference>
<dbReference type="SMART" id="SM00382">
    <property type="entry name" value="AAA"/>
    <property type="match status" value="1"/>
</dbReference>
<dbReference type="SUPFAM" id="SSF52540">
    <property type="entry name" value="P-loop containing nucleoside triphosphate hydrolases"/>
    <property type="match status" value="1"/>
</dbReference>
<dbReference type="PROSITE" id="PS00211">
    <property type="entry name" value="ABC_TRANSPORTER_1"/>
    <property type="match status" value="1"/>
</dbReference>
<dbReference type="PROSITE" id="PS50893">
    <property type="entry name" value="ABC_TRANSPORTER_2"/>
    <property type="match status" value="1"/>
</dbReference>
<dbReference type="PROSITE" id="PS51267">
    <property type="entry name" value="MACB"/>
    <property type="match status" value="1"/>
</dbReference>
<name>MACB_BDEBA</name>
<evidence type="ECO:0000255" key="1">
    <source>
        <dbReference type="HAMAP-Rule" id="MF_01720"/>
    </source>
</evidence>
<reference key="1">
    <citation type="journal article" date="2004" name="Science">
        <title>A predator unmasked: life cycle of Bdellovibrio bacteriovorus from a genomic perspective.</title>
        <authorList>
            <person name="Rendulic S."/>
            <person name="Jagtap P."/>
            <person name="Rosinus A."/>
            <person name="Eppinger M."/>
            <person name="Baar C."/>
            <person name="Lanz C."/>
            <person name="Keller H."/>
            <person name="Lambert C."/>
            <person name="Evans K.J."/>
            <person name="Goesmann A."/>
            <person name="Meyer F."/>
            <person name="Sockett R.E."/>
            <person name="Schuster S.C."/>
        </authorList>
    </citation>
    <scope>NUCLEOTIDE SEQUENCE [LARGE SCALE GENOMIC DNA]</scope>
    <source>
        <strain>ATCC 15356 / DSM 50701 / NCIMB 9529 / HD100</strain>
    </source>
</reference>
<comment type="function">
    <text evidence="1">Non-canonical ABC transporter that contains transmembrane domains (TMD), which form a pore in the inner membrane, and an ATP-binding domain (NBD), which is responsible for energy generation. Confers resistance against macrolides.</text>
</comment>
<comment type="subunit">
    <text evidence="1">Homodimer.</text>
</comment>
<comment type="subcellular location">
    <subcellularLocation>
        <location evidence="1">Cell inner membrane</location>
        <topology evidence="1">Multi-pass membrane protein</topology>
    </subcellularLocation>
</comment>
<comment type="similarity">
    <text evidence="1">Belongs to the ABC transporter superfamily. Macrolide exporter (TC 3.A.1.122) family.</text>
</comment>
<gene>
    <name evidence="1" type="primary">macB</name>
    <name type="ordered locus">Bd0709</name>
</gene>
<proteinExistence type="inferred from homology"/>
<accession>Q6MPX9</accession>
<feature type="chain" id="PRO_0000269923" description="Macrolide export ATP-binding/permease protein MacB">
    <location>
        <begin position="1"/>
        <end position="650"/>
    </location>
</feature>
<feature type="transmembrane region" description="Helical" evidence="1">
    <location>
        <begin position="267"/>
        <end position="287"/>
    </location>
</feature>
<feature type="transmembrane region" description="Helical" evidence="1">
    <location>
        <begin position="531"/>
        <end position="551"/>
    </location>
</feature>
<feature type="transmembrane region" description="Helical" evidence="1">
    <location>
        <begin position="580"/>
        <end position="600"/>
    </location>
</feature>
<feature type="transmembrane region" description="Helical" evidence="1">
    <location>
        <begin position="610"/>
        <end position="630"/>
    </location>
</feature>
<feature type="domain" description="ABC transporter" evidence="1">
    <location>
        <begin position="2"/>
        <end position="238"/>
    </location>
</feature>
<feature type="binding site" evidence="1">
    <location>
        <begin position="38"/>
        <end position="45"/>
    </location>
    <ligand>
        <name>ATP</name>
        <dbReference type="ChEBI" id="CHEBI:30616"/>
    </ligand>
</feature>
<keyword id="KW-0046">Antibiotic resistance</keyword>
<keyword id="KW-0067">ATP-binding</keyword>
<keyword id="KW-0997">Cell inner membrane</keyword>
<keyword id="KW-1003">Cell membrane</keyword>
<keyword id="KW-0472">Membrane</keyword>
<keyword id="KW-0547">Nucleotide-binding</keyword>
<keyword id="KW-1185">Reference proteome</keyword>
<keyword id="KW-1278">Translocase</keyword>
<keyword id="KW-0812">Transmembrane</keyword>
<keyword id="KW-1133">Transmembrane helix</keyword>
<keyword id="KW-0813">Transport</keyword>
<organism>
    <name type="scientific">Bdellovibrio bacteriovorus (strain ATCC 15356 / DSM 50701 / NCIMB 9529 / HD100)</name>
    <dbReference type="NCBI Taxonomy" id="264462"/>
    <lineage>
        <taxon>Bacteria</taxon>
        <taxon>Pseudomonadati</taxon>
        <taxon>Bdellovibrionota</taxon>
        <taxon>Bdellovibrionia</taxon>
        <taxon>Bdellovibrionales</taxon>
        <taxon>Pseudobdellovibrionaceae</taxon>
        <taxon>Bdellovibrio</taxon>
    </lineage>
</organism>